<comment type="function">
    <text evidence="1">Plays an essential role in the initiation and regulation of chromosomal replication. ATP-DnaA binds to the origin of replication (oriC) to initiate formation of the DNA replication initiation complex once per cell cycle. Binds the DnaA box (a 9 base pair repeat at the origin) and separates the double-stranded (ds)DNA. Forms a right-handed helical filament on oriC DNA; dsDNA binds to the exterior of the filament while single-stranded (ss)DNA is stabiized in the filament's interior. The ATP-DnaA-oriC complex binds and stabilizes one strand of the AT-rich DNA unwinding element (DUE), permitting loading of DNA polymerase. After initiation quickly degrades to an ADP-DnaA complex that is not apt for DNA replication. Binds acidic phospholipids.</text>
</comment>
<comment type="subunit">
    <text evidence="1">Oligomerizes as a right-handed, spiral filament on DNA at oriC.</text>
</comment>
<comment type="subcellular location">
    <subcellularLocation>
        <location evidence="1">Cytoplasm</location>
    </subcellularLocation>
</comment>
<comment type="domain">
    <text evidence="1">Domain I is involved in oligomerization and binding regulators, domain II is flexibile and of varying length in different bacteria, domain III forms the AAA+ region, while domain IV binds dsDNA.</text>
</comment>
<comment type="similarity">
    <text evidence="1">Belongs to the DnaA family.</text>
</comment>
<organism>
    <name type="scientific">Helicobacter pylori (strain G27)</name>
    <dbReference type="NCBI Taxonomy" id="563041"/>
    <lineage>
        <taxon>Bacteria</taxon>
        <taxon>Pseudomonadati</taxon>
        <taxon>Campylobacterota</taxon>
        <taxon>Epsilonproteobacteria</taxon>
        <taxon>Campylobacterales</taxon>
        <taxon>Helicobacteraceae</taxon>
        <taxon>Helicobacter</taxon>
    </lineage>
</organism>
<proteinExistence type="inferred from homology"/>
<reference key="1">
    <citation type="journal article" date="2009" name="J. Bacteriol.">
        <title>The complete genome sequence of Helicobacter pylori strain G27.</title>
        <authorList>
            <person name="Baltrus D.A."/>
            <person name="Amieva M.R."/>
            <person name="Covacci A."/>
            <person name="Lowe T.M."/>
            <person name="Merrell D.S."/>
            <person name="Ottemann K.M."/>
            <person name="Stein M."/>
            <person name="Salama N.R."/>
            <person name="Guillemin K."/>
        </authorList>
    </citation>
    <scope>NUCLEOTIDE SEQUENCE [LARGE SCALE GENOMIC DNA]</scope>
    <source>
        <strain>G27</strain>
    </source>
</reference>
<protein>
    <recommendedName>
        <fullName evidence="1">Chromosomal replication initiator protein DnaA</fullName>
    </recommendedName>
</protein>
<sequence>MDTNNNIEKEILALVKQKVSPIEYENYFSQLKYNPNASKSDIAFFYAPNMLLCNWITAKHGALLKEILSQNKVGMHLAHSVDVRIEVAPKIQINAQANINYKAIKTSVKDSYTFENFVVGSCNNTVYEIAKKVAQSDTPPYNPVLFYGGTGLGKTHILNAIGNHALEKHKKVVLVTSEDFLTDFLKHLDNKTMDSFKKKYRHCDFFLLDDAQFLQGKPKLEEEFFHTFNELHANSKQIVLISDRSPKNIAGLEDRLKSRFEWGITAKVMPPDLETKLSIVKQKCQLNKITLPEEVMEYIAQHISDNIRQMEGAIIKISVNANLMNAPIDLNLAKTVLEDLQKDHAEGSSLENILLAVAQSLNLKSSEIKVSSRQKNVALARKLVVYFARLYTPNPTLSLAQFLDLKDHSSISKMYSSVKKMLEEEKNPFVLSLREEIKNRLNELNDKKTAFNSSE</sequence>
<keyword id="KW-0067">ATP-binding</keyword>
<keyword id="KW-0963">Cytoplasm</keyword>
<keyword id="KW-0235">DNA replication</keyword>
<keyword id="KW-0238">DNA-binding</keyword>
<keyword id="KW-0446">Lipid-binding</keyword>
<keyword id="KW-0547">Nucleotide-binding</keyword>
<keyword id="KW-1185">Reference proteome</keyword>
<gene>
    <name evidence="1" type="primary">dnaA</name>
    <name type="ordered locus">HPG27_1450</name>
</gene>
<accession>B5Z9E3</accession>
<evidence type="ECO:0000255" key="1">
    <source>
        <dbReference type="HAMAP-Rule" id="MF_00377"/>
    </source>
</evidence>
<feature type="chain" id="PRO_1000121986" description="Chromosomal replication initiator protein DnaA">
    <location>
        <begin position="1"/>
        <end position="455"/>
    </location>
</feature>
<feature type="region of interest" description="Domain I, interacts with DnaA modulators" evidence="1">
    <location>
        <begin position="1"/>
        <end position="75"/>
    </location>
</feature>
<feature type="region of interest" description="Domain II" evidence="1">
    <location>
        <begin position="75"/>
        <end position="106"/>
    </location>
</feature>
<feature type="region of interest" description="Domain III, AAA+ region" evidence="1">
    <location>
        <begin position="107"/>
        <end position="321"/>
    </location>
</feature>
<feature type="region of interest" description="Domain IV, binds dsDNA" evidence="1">
    <location>
        <begin position="322"/>
        <end position="455"/>
    </location>
</feature>
<feature type="binding site" evidence="1">
    <location>
        <position position="151"/>
    </location>
    <ligand>
        <name>ATP</name>
        <dbReference type="ChEBI" id="CHEBI:30616"/>
    </ligand>
</feature>
<feature type="binding site" evidence="1">
    <location>
        <position position="153"/>
    </location>
    <ligand>
        <name>ATP</name>
        <dbReference type="ChEBI" id="CHEBI:30616"/>
    </ligand>
</feature>
<feature type="binding site" evidence="1">
    <location>
        <position position="154"/>
    </location>
    <ligand>
        <name>ATP</name>
        <dbReference type="ChEBI" id="CHEBI:30616"/>
    </ligand>
</feature>
<feature type="binding site" evidence="1">
    <location>
        <position position="155"/>
    </location>
    <ligand>
        <name>ATP</name>
        <dbReference type="ChEBI" id="CHEBI:30616"/>
    </ligand>
</feature>
<dbReference type="EMBL" id="CP001173">
    <property type="protein sequence ID" value="ACI28192.1"/>
    <property type="molecule type" value="Genomic_DNA"/>
</dbReference>
<dbReference type="RefSeq" id="WP_000380615.1">
    <property type="nucleotide sequence ID" value="NC_011333.1"/>
</dbReference>
<dbReference type="SMR" id="B5Z9E3"/>
<dbReference type="KEGG" id="hpg:HPG27_1450"/>
<dbReference type="HOGENOM" id="CLU_026910_3_2_7"/>
<dbReference type="Proteomes" id="UP000001735">
    <property type="component" value="Chromosome"/>
</dbReference>
<dbReference type="GO" id="GO:0005737">
    <property type="term" value="C:cytoplasm"/>
    <property type="evidence" value="ECO:0007669"/>
    <property type="project" value="UniProtKB-SubCell"/>
</dbReference>
<dbReference type="GO" id="GO:0005886">
    <property type="term" value="C:plasma membrane"/>
    <property type="evidence" value="ECO:0007669"/>
    <property type="project" value="TreeGrafter"/>
</dbReference>
<dbReference type="GO" id="GO:0005524">
    <property type="term" value="F:ATP binding"/>
    <property type="evidence" value="ECO:0007669"/>
    <property type="project" value="UniProtKB-UniRule"/>
</dbReference>
<dbReference type="GO" id="GO:0016887">
    <property type="term" value="F:ATP hydrolysis activity"/>
    <property type="evidence" value="ECO:0007669"/>
    <property type="project" value="InterPro"/>
</dbReference>
<dbReference type="GO" id="GO:0003688">
    <property type="term" value="F:DNA replication origin binding"/>
    <property type="evidence" value="ECO:0007669"/>
    <property type="project" value="UniProtKB-UniRule"/>
</dbReference>
<dbReference type="GO" id="GO:0008289">
    <property type="term" value="F:lipid binding"/>
    <property type="evidence" value="ECO:0007669"/>
    <property type="project" value="UniProtKB-KW"/>
</dbReference>
<dbReference type="GO" id="GO:0006270">
    <property type="term" value="P:DNA replication initiation"/>
    <property type="evidence" value="ECO:0007669"/>
    <property type="project" value="UniProtKB-UniRule"/>
</dbReference>
<dbReference type="GO" id="GO:0006275">
    <property type="term" value="P:regulation of DNA replication"/>
    <property type="evidence" value="ECO:0007669"/>
    <property type="project" value="UniProtKB-UniRule"/>
</dbReference>
<dbReference type="CDD" id="cd00009">
    <property type="entry name" value="AAA"/>
    <property type="match status" value="1"/>
</dbReference>
<dbReference type="CDD" id="cd06571">
    <property type="entry name" value="Bac_DnaA_C"/>
    <property type="match status" value="1"/>
</dbReference>
<dbReference type="FunFam" id="1.10.1750.10:FF:000007">
    <property type="entry name" value="Chromosomal replication initiator protein DnaA"/>
    <property type="match status" value="1"/>
</dbReference>
<dbReference type="FunFam" id="3.40.50.300:FF:002820">
    <property type="entry name" value="Chromosomal replication initiator protein DnaA"/>
    <property type="match status" value="1"/>
</dbReference>
<dbReference type="Gene3D" id="1.10.1750.10">
    <property type="match status" value="1"/>
</dbReference>
<dbReference type="Gene3D" id="1.10.8.60">
    <property type="match status" value="1"/>
</dbReference>
<dbReference type="Gene3D" id="3.30.300.180">
    <property type="match status" value="1"/>
</dbReference>
<dbReference type="Gene3D" id="3.40.50.300">
    <property type="entry name" value="P-loop containing nucleotide triphosphate hydrolases"/>
    <property type="match status" value="1"/>
</dbReference>
<dbReference type="HAMAP" id="MF_00377">
    <property type="entry name" value="DnaA_bact"/>
    <property type="match status" value="1"/>
</dbReference>
<dbReference type="InterPro" id="IPR003593">
    <property type="entry name" value="AAA+_ATPase"/>
</dbReference>
<dbReference type="InterPro" id="IPR001957">
    <property type="entry name" value="Chromosome_initiator_DnaA"/>
</dbReference>
<dbReference type="InterPro" id="IPR020591">
    <property type="entry name" value="Chromosome_initiator_DnaA-like"/>
</dbReference>
<dbReference type="InterPro" id="IPR018312">
    <property type="entry name" value="Chromosome_initiator_DnaA_CS"/>
</dbReference>
<dbReference type="InterPro" id="IPR013159">
    <property type="entry name" value="DnaA_C"/>
</dbReference>
<dbReference type="InterPro" id="IPR013317">
    <property type="entry name" value="DnaA_dom"/>
</dbReference>
<dbReference type="InterPro" id="IPR024633">
    <property type="entry name" value="DnaA_N_dom"/>
</dbReference>
<dbReference type="InterPro" id="IPR038454">
    <property type="entry name" value="DnaA_N_sf"/>
</dbReference>
<dbReference type="InterPro" id="IPR027417">
    <property type="entry name" value="P-loop_NTPase"/>
</dbReference>
<dbReference type="InterPro" id="IPR010921">
    <property type="entry name" value="Trp_repressor/repl_initiator"/>
</dbReference>
<dbReference type="NCBIfam" id="TIGR00362">
    <property type="entry name" value="DnaA"/>
    <property type="match status" value="1"/>
</dbReference>
<dbReference type="PANTHER" id="PTHR30050">
    <property type="entry name" value="CHROMOSOMAL REPLICATION INITIATOR PROTEIN DNAA"/>
    <property type="match status" value="1"/>
</dbReference>
<dbReference type="PANTHER" id="PTHR30050:SF2">
    <property type="entry name" value="CHROMOSOMAL REPLICATION INITIATOR PROTEIN DNAA"/>
    <property type="match status" value="1"/>
</dbReference>
<dbReference type="Pfam" id="PF00308">
    <property type="entry name" value="Bac_DnaA"/>
    <property type="match status" value="1"/>
</dbReference>
<dbReference type="Pfam" id="PF08299">
    <property type="entry name" value="Bac_DnaA_C"/>
    <property type="match status" value="1"/>
</dbReference>
<dbReference type="Pfam" id="PF11638">
    <property type="entry name" value="DnaA_N"/>
    <property type="match status" value="1"/>
</dbReference>
<dbReference type="PRINTS" id="PR00051">
    <property type="entry name" value="DNAA"/>
</dbReference>
<dbReference type="SMART" id="SM00382">
    <property type="entry name" value="AAA"/>
    <property type="match status" value="1"/>
</dbReference>
<dbReference type="SMART" id="SM00760">
    <property type="entry name" value="Bac_DnaA_C"/>
    <property type="match status" value="1"/>
</dbReference>
<dbReference type="SUPFAM" id="SSF52540">
    <property type="entry name" value="P-loop containing nucleoside triphosphate hydrolases"/>
    <property type="match status" value="1"/>
</dbReference>
<dbReference type="SUPFAM" id="SSF48295">
    <property type="entry name" value="TrpR-like"/>
    <property type="match status" value="1"/>
</dbReference>
<dbReference type="PROSITE" id="PS01008">
    <property type="entry name" value="DNAA"/>
    <property type="match status" value="1"/>
</dbReference>
<name>DNAA_HELPG</name>